<proteinExistence type="evidence at protein level"/>
<keyword id="KW-0186">Copper</keyword>
<keyword id="KW-0903">Direct protein sequencing</keyword>
<keyword id="KW-1015">Disulfide bond</keyword>
<keyword id="KW-0325">Glycoprotein</keyword>
<keyword id="KW-0439">Lignin degradation</keyword>
<keyword id="KW-0479">Metal-binding</keyword>
<keyword id="KW-0560">Oxidoreductase</keyword>
<keyword id="KW-0677">Repeat</keyword>
<keyword id="KW-0964">Secreted</keyword>
<keyword id="KW-0732">Signal</keyword>
<gene>
    <name type="primary">lcc1</name>
</gene>
<dbReference type="EC" id="1.10.3.2" evidence="2"/>
<dbReference type="EMBL" id="L10664">
    <property type="protein sequence ID" value="AAC18877.1"/>
    <property type="molecule type" value="Genomic_DNA"/>
</dbReference>
<dbReference type="SMR" id="Q12541"/>
<dbReference type="CAZy" id="AA1">
    <property type="family name" value="Auxiliary Activities 1"/>
</dbReference>
<dbReference type="GlyCosmos" id="Q12541">
    <property type="glycosylation" value="4 sites, No reported glycans"/>
</dbReference>
<dbReference type="GO" id="GO:0005576">
    <property type="term" value="C:extracellular region"/>
    <property type="evidence" value="ECO:0007669"/>
    <property type="project" value="UniProtKB-SubCell"/>
</dbReference>
<dbReference type="GO" id="GO:0005507">
    <property type="term" value="F:copper ion binding"/>
    <property type="evidence" value="ECO:0007669"/>
    <property type="project" value="InterPro"/>
</dbReference>
<dbReference type="GO" id="GO:0052716">
    <property type="term" value="F:hydroquinone:oxygen oxidoreductase activity"/>
    <property type="evidence" value="ECO:0007669"/>
    <property type="project" value="UniProtKB-EC"/>
</dbReference>
<dbReference type="GO" id="GO:0046274">
    <property type="term" value="P:lignin catabolic process"/>
    <property type="evidence" value="ECO:0007669"/>
    <property type="project" value="UniProtKB-KW"/>
</dbReference>
<dbReference type="CDD" id="cd13856">
    <property type="entry name" value="CuRO_1_Tv-LCC_like"/>
    <property type="match status" value="1"/>
</dbReference>
<dbReference type="CDD" id="cd13882">
    <property type="entry name" value="CuRO_2_Tv-LCC_like"/>
    <property type="match status" value="1"/>
</dbReference>
<dbReference type="CDD" id="cd13903">
    <property type="entry name" value="CuRO_3_Tv-LCC_like"/>
    <property type="match status" value="1"/>
</dbReference>
<dbReference type="FunFam" id="2.60.40.420:FF:000045">
    <property type="entry name" value="Laccase 2"/>
    <property type="match status" value="1"/>
</dbReference>
<dbReference type="Gene3D" id="2.60.40.420">
    <property type="entry name" value="Cupredoxins - blue copper proteins"/>
    <property type="match status" value="3"/>
</dbReference>
<dbReference type="InterPro" id="IPR011707">
    <property type="entry name" value="Cu-oxidase-like_N"/>
</dbReference>
<dbReference type="InterPro" id="IPR001117">
    <property type="entry name" value="Cu-oxidase_2nd"/>
</dbReference>
<dbReference type="InterPro" id="IPR011706">
    <property type="entry name" value="Cu-oxidase_C"/>
</dbReference>
<dbReference type="InterPro" id="IPR045087">
    <property type="entry name" value="Cu-oxidase_fam"/>
</dbReference>
<dbReference type="InterPro" id="IPR033138">
    <property type="entry name" value="Cu_oxidase_CS"/>
</dbReference>
<dbReference type="InterPro" id="IPR002355">
    <property type="entry name" value="Cu_oxidase_Cu_BS"/>
</dbReference>
<dbReference type="InterPro" id="IPR008972">
    <property type="entry name" value="Cupredoxin"/>
</dbReference>
<dbReference type="PANTHER" id="PTHR11709:SF511">
    <property type="entry name" value="LACCASE"/>
    <property type="match status" value="1"/>
</dbReference>
<dbReference type="PANTHER" id="PTHR11709">
    <property type="entry name" value="MULTI-COPPER OXIDASE"/>
    <property type="match status" value="1"/>
</dbReference>
<dbReference type="Pfam" id="PF00394">
    <property type="entry name" value="Cu-oxidase"/>
    <property type="match status" value="1"/>
</dbReference>
<dbReference type="Pfam" id="PF07731">
    <property type="entry name" value="Cu-oxidase_2"/>
    <property type="match status" value="1"/>
</dbReference>
<dbReference type="Pfam" id="PF07732">
    <property type="entry name" value="Cu-oxidase_3"/>
    <property type="match status" value="1"/>
</dbReference>
<dbReference type="SUPFAM" id="SSF49503">
    <property type="entry name" value="Cupredoxins"/>
    <property type="match status" value="3"/>
</dbReference>
<dbReference type="PROSITE" id="PS00079">
    <property type="entry name" value="MULTICOPPER_OXIDASE1"/>
    <property type="match status" value="2"/>
</dbReference>
<dbReference type="PROSITE" id="PS00080">
    <property type="entry name" value="MULTICOPPER_OXIDASE2"/>
    <property type="match status" value="1"/>
</dbReference>
<evidence type="ECO:0000250" key="1">
    <source>
        <dbReference type="UniProtKB" id="D0VWU3"/>
    </source>
</evidence>
<evidence type="ECO:0000250" key="2">
    <source>
        <dbReference type="UniProtKB" id="Q70KY3"/>
    </source>
</evidence>
<evidence type="ECO:0000255" key="3"/>
<evidence type="ECO:0000305" key="4"/>
<protein>
    <recommendedName>
        <fullName>Laccase-1</fullName>
        <ecNumber evidence="2">1.10.3.2</ecNumber>
    </recommendedName>
    <alternativeName>
        <fullName>Benzenediol:oxygen oxidoreductase 1</fullName>
    </alternativeName>
    <alternativeName>
        <fullName>Diphenol oxidase 1</fullName>
    </alternativeName>
    <alternativeName>
        <fullName>Laccase I</fullName>
    </alternativeName>
    <alternativeName>
        <fullName>Urishiol oxidase 1</fullName>
    </alternativeName>
</protein>
<name>LAC1_AGABI</name>
<comment type="function">
    <text evidence="2">Lignin degradation and detoxification of lignin-derived products.</text>
</comment>
<comment type="catalytic activity">
    <reaction evidence="2">
        <text>4 hydroquinone + O2 = 4 benzosemiquinone + 2 H2O</text>
        <dbReference type="Rhea" id="RHEA:11276"/>
        <dbReference type="ChEBI" id="CHEBI:15377"/>
        <dbReference type="ChEBI" id="CHEBI:15379"/>
        <dbReference type="ChEBI" id="CHEBI:17594"/>
        <dbReference type="ChEBI" id="CHEBI:17977"/>
        <dbReference type="EC" id="1.10.3.2"/>
    </reaction>
</comment>
<comment type="cofactor">
    <cofactor evidence="2">
        <name>Cu cation</name>
        <dbReference type="ChEBI" id="CHEBI:23378"/>
    </cofactor>
    <text evidence="2">Binds 4 Cu cations per monomer.</text>
</comment>
<comment type="subcellular location">
    <subcellularLocation>
        <location evidence="2">Secreted</location>
    </subcellularLocation>
</comment>
<comment type="similarity">
    <text evidence="4">Belongs to the multicopper oxidase family.</text>
</comment>
<feature type="signal peptide">
    <location>
        <begin position="1"/>
        <end position="19"/>
    </location>
</feature>
<feature type="chain" id="PRO_0000002918" description="Laccase-1">
    <location>
        <begin position="20"/>
        <end position="520"/>
    </location>
</feature>
<feature type="domain" description="Plastocyanin-like 1">
    <location>
        <begin position="21"/>
        <end position="145"/>
    </location>
</feature>
<feature type="domain" description="Plastocyanin-like 2">
    <location>
        <begin position="157"/>
        <end position="305"/>
    </location>
</feature>
<feature type="domain" description="Plastocyanin-like 3">
    <location>
        <begin position="375"/>
        <end position="488"/>
    </location>
</feature>
<feature type="binding site" description="type 2 copper site" evidence="1">
    <location>
        <position position="82"/>
    </location>
    <ligand>
        <name>Cu cation</name>
        <dbReference type="ChEBI" id="CHEBI:23378"/>
        <label>1</label>
    </ligand>
</feature>
<feature type="binding site" description="type 3 copper site" evidence="1">
    <location>
        <position position="84"/>
    </location>
    <ligand>
        <name>Cu cation</name>
        <dbReference type="ChEBI" id="CHEBI:23378"/>
        <label>2</label>
    </ligand>
</feature>
<feature type="binding site" description="type 3 copper site" evidence="1">
    <location>
        <position position="127"/>
    </location>
    <ligand>
        <name>Cu cation</name>
        <dbReference type="ChEBI" id="CHEBI:23378"/>
        <label>2</label>
    </ligand>
</feature>
<feature type="binding site" description="type 3 copper site" evidence="1">
    <location>
        <position position="129"/>
    </location>
    <ligand>
        <name>Cu cation</name>
        <dbReference type="ChEBI" id="CHEBI:23378"/>
        <label>3</label>
    </ligand>
</feature>
<feature type="binding site" description="type 1 copper site" evidence="1">
    <location>
        <position position="417"/>
    </location>
    <ligand>
        <name>Cu cation</name>
        <dbReference type="ChEBI" id="CHEBI:23378"/>
        <label>4</label>
    </ligand>
</feature>
<feature type="binding site" description="type 2 copper site" evidence="1">
    <location>
        <position position="420"/>
    </location>
    <ligand>
        <name>Cu cation</name>
        <dbReference type="ChEBI" id="CHEBI:23378"/>
        <label>1</label>
    </ligand>
</feature>
<feature type="binding site" description="type 3 copper site" evidence="1">
    <location>
        <position position="422"/>
    </location>
    <ligand>
        <name>Cu cation</name>
        <dbReference type="ChEBI" id="CHEBI:23378"/>
        <label>3</label>
    </ligand>
</feature>
<feature type="binding site" description="type 3 copper site" evidence="1">
    <location>
        <position position="470"/>
    </location>
    <ligand>
        <name>Cu cation</name>
        <dbReference type="ChEBI" id="CHEBI:23378"/>
        <label>3</label>
    </ligand>
</feature>
<feature type="binding site" description="type 1 copper site" evidence="1">
    <location>
        <position position="471"/>
    </location>
    <ligand>
        <name>Cu cation</name>
        <dbReference type="ChEBI" id="CHEBI:23378"/>
        <label>4</label>
    </ligand>
</feature>
<feature type="binding site" description="type 3 copper site" evidence="1">
    <location>
        <position position="472"/>
    </location>
    <ligand>
        <name>Cu cation</name>
        <dbReference type="ChEBI" id="CHEBI:23378"/>
        <label>2</label>
    </ligand>
</feature>
<feature type="binding site" description="type 1 copper site" evidence="1">
    <location>
        <position position="476"/>
    </location>
    <ligand>
        <name>Cu cation</name>
        <dbReference type="ChEBI" id="CHEBI:23378"/>
        <label>4</label>
    </ligand>
</feature>
<feature type="glycosylation site" description="N-linked (GlcNAc...) asparagine" evidence="3">
    <location>
        <position position="108"/>
    </location>
</feature>
<feature type="glycosylation site" description="N-linked (GlcNAc...) asparagine" evidence="3">
    <location>
        <position position="239"/>
    </location>
</feature>
<feature type="glycosylation site" description="N-linked (GlcNAc...) asparagine" evidence="3">
    <location>
        <position position="299"/>
    </location>
</feature>
<feature type="glycosylation site" description="N-linked (GlcNAc...) asparagine" evidence="3">
    <location>
        <position position="492"/>
    </location>
</feature>
<feature type="disulfide bond" evidence="2">
    <location>
        <begin position="103"/>
        <end position="509"/>
    </location>
</feature>
<feature type="disulfide bond" evidence="1">
    <location>
        <begin position="135"/>
        <end position="229"/>
    </location>
</feature>
<reference key="1">
    <citation type="journal article" date="1993" name="J. Gen. Microbiol.">
        <title>Identification of two laccase genes in the cultivated mushroom Agaricus bisporus.</title>
        <authorList>
            <person name="Perry C.R."/>
            <person name="Smith M."/>
            <person name="Britnell C.H."/>
            <person name="Wood D.A."/>
            <person name="Thurston C.F."/>
        </authorList>
    </citation>
    <scope>NUCLEOTIDE SEQUENCE [GENOMIC DNA]</scope>
    <scope>PARTIAL PROTEIN SEQUENCE</scope>
    <source>
        <strain>D649</strain>
        <tissue>Mycelium</tissue>
    </source>
</reference>
<accession>Q12541</accession>
<organism>
    <name type="scientific">Agaricus bisporus</name>
    <name type="common">White button mushroom</name>
    <dbReference type="NCBI Taxonomy" id="5341"/>
    <lineage>
        <taxon>Eukaryota</taxon>
        <taxon>Fungi</taxon>
        <taxon>Dikarya</taxon>
        <taxon>Basidiomycota</taxon>
        <taxon>Agaricomycotina</taxon>
        <taxon>Agaricomycetes</taxon>
        <taxon>Agaricomycetidae</taxon>
        <taxon>Agaricales</taxon>
        <taxon>Agaricineae</taxon>
        <taxon>Agaricaceae</taxon>
        <taxon>Agaricus</taxon>
    </lineage>
</organism>
<sequence>MRLSNALVLVAACISSVVAKTRTFDFDLVNTRLAPDGFERDTVVINGEFPGTLIQVNKGDSVRIPLHNKLTSPTMRRSVSIHWHGFFQARTSGQDGPSFVNQCPQPPNTTFTYEFSVAEQSGTFWYHSHLSTQYCDGLRGAFIVYDPRDPLRHLYDVDDESTVITLAEWYHILAPDATNEFFSSGIIPVQDSGLINGKGRFNGGPLTPFAVVNVRRGKRYRLRVIAISCRPFFTFSVDNHSLVFMEADGVEHDPVEVQNVDIYAAQRVSVILHANQPIDNYWIRAPMTGGNPDRNPNLNISLTLAILRYHGARHVEPTTVNVPGHKLLDQEMHPIRQEGPGKLGDGPPDKHITLNIAQPNAPFFDINGISYISPTVPVLLQILSGAKRPEDVLPSEQIFFVPKNSLIEVNIPGEGAHPFHLHGHNFDVVLASNDDTFNFKNPPRRDVYPINGGNTTFRFFTDNPGAWFLHCHIDWHLEAGLAIVFAEAPEDNVSGPQSQITPQDWLDLCPEYNAIEPEFQ</sequence>